<sequence>MAELKNDRYLRALLKQPVDATPVWMMRQAGRYLPEYKATRAQAGDFMSLCRNAELACEVTLQPLRRYKLDAAILFSDILTVPDAMGLGLYFEEGEGPRFERPTDTVDAIKKLCIPDPEDELGYVMRAVSTIRRELKGEVPLIGFSGSPWTLATYMVEGGSSKTFEKIKKMAYAEPAALHMLLDKLADSVILYLNAQVANGAQSLMIFDSWGGALSHHAYREFSLRYMQKIVDGLTRFADGRQVPVTLFTKGGGLWLESMAETGCDALGLDWTVDIGDARRRVGDKVALQGNMDPSMLYASPERIHQEVGQILSSYGKGTGHVFNLGHGIHQHVDPEHAGAFINSVHELSPQYHK</sequence>
<accession>Q12S16</accession>
<gene>
    <name evidence="1" type="primary">hemE</name>
    <name type="ordered locus">Sden_0468</name>
</gene>
<protein>
    <recommendedName>
        <fullName evidence="1">Uroporphyrinogen decarboxylase</fullName>
        <shortName evidence="1">UPD</shortName>
        <shortName evidence="1">URO-D</shortName>
        <ecNumber evidence="1">4.1.1.37</ecNumber>
    </recommendedName>
</protein>
<name>DCUP_SHEDO</name>
<comment type="function">
    <text evidence="1">Catalyzes the decarboxylation of four acetate groups of uroporphyrinogen-III to yield coproporphyrinogen-III.</text>
</comment>
<comment type="catalytic activity">
    <reaction evidence="1">
        <text>uroporphyrinogen III + 4 H(+) = coproporphyrinogen III + 4 CO2</text>
        <dbReference type="Rhea" id="RHEA:19865"/>
        <dbReference type="ChEBI" id="CHEBI:15378"/>
        <dbReference type="ChEBI" id="CHEBI:16526"/>
        <dbReference type="ChEBI" id="CHEBI:57308"/>
        <dbReference type="ChEBI" id="CHEBI:57309"/>
        <dbReference type="EC" id="4.1.1.37"/>
    </reaction>
</comment>
<comment type="pathway">
    <text evidence="1">Porphyrin-containing compound metabolism; protoporphyrin-IX biosynthesis; coproporphyrinogen-III from 5-aminolevulinate: step 4/4.</text>
</comment>
<comment type="subunit">
    <text evidence="1">Homodimer.</text>
</comment>
<comment type="subcellular location">
    <subcellularLocation>
        <location evidence="1">Cytoplasm</location>
    </subcellularLocation>
</comment>
<comment type="similarity">
    <text evidence="1">Belongs to the uroporphyrinogen decarboxylase family.</text>
</comment>
<organism>
    <name type="scientific">Shewanella denitrificans (strain OS217 / ATCC BAA-1090 / DSM 15013)</name>
    <dbReference type="NCBI Taxonomy" id="318161"/>
    <lineage>
        <taxon>Bacteria</taxon>
        <taxon>Pseudomonadati</taxon>
        <taxon>Pseudomonadota</taxon>
        <taxon>Gammaproteobacteria</taxon>
        <taxon>Alteromonadales</taxon>
        <taxon>Shewanellaceae</taxon>
        <taxon>Shewanella</taxon>
    </lineage>
</organism>
<reference key="1">
    <citation type="submission" date="2006-03" db="EMBL/GenBank/DDBJ databases">
        <title>Complete sequence of Shewanella denitrificans OS217.</title>
        <authorList>
            <consortium name="US DOE Joint Genome Institute"/>
            <person name="Copeland A."/>
            <person name="Lucas S."/>
            <person name="Lapidus A."/>
            <person name="Barry K."/>
            <person name="Detter J.C."/>
            <person name="Glavina del Rio T."/>
            <person name="Hammon N."/>
            <person name="Israni S."/>
            <person name="Dalin E."/>
            <person name="Tice H."/>
            <person name="Pitluck S."/>
            <person name="Brettin T."/>
            <person name="Bruce D."/>
            <person name="Han C."/>
            <person name="Tapia R."/>
            <person name="Gilna P."/>
            <person name="Kiss H."/>
            <person name="Schmutz J."/>
            <person name="Larimer F."/>
            <person name="Land M."/>
            <person name="Hauser L."/>
            <person name="Kyrpides N."/>
            <person name="Lykidis A."/>
            <person name="Richardson P."/>
        </authorList>
    </citation>
    <scope>NUCLEOTIDE SEQUENCE [LARGE SCALE GENOMIC DNA]</scope>
    <source>
        <strain>OS217 / ATCC BAA-1090 / DSM 15013</strain>
    </source>
</reference>
<keyword id="KW-0963">Cytoplasm</keyword>
<keyword id="KW-0210">Decarboxylase</keyword>
<keyword id="KW-0456">Lyase</keyword>
<keyword id="KW-0627">Porphyrin biosynthesis</keyword>
<keyword id="KW-1185">Reference proteome</keyword>
<feature type="chain" id="PRO_1000023969" description="Uroporphyrinogen decarboxylase">
    <location>
        <begin position="1"/>
        <end position="354"/>
    </location>
</feature>
<feature type="binding site" evidence="1">
    <location>
        <begin position="27"/>
        <end position="31"/>
    </location>
    <ligand>
        <name>substrate</name>
    </ligand>
</feature>
<feature type="binding site" evidence="1">
    <location>
        <position position="77"/>
    </location>
    <ligand>
        <name>substrate</name>
    </ligand>
</feature>
<feature type="binding site" evidence="1">
    <location>
        <position position="154"/>
    </location>
    <ligand>
        <name>substrate</name>
    </ligand>
</feature>
<feature type="binding site" evidence="1">
    <location>
        <position position="209"/>
    </location>
    <ligand>
        <name>substrate</name>
    </ligand>
</feature>
<feature type="binding site" evidence="1">
    <location>
        <position position="327"/>
    </location>
    <ligand>
        <name>substrate</name>
    </ligand>
</feature>
<feature type="site" description="Transition state stabilizer" evidence="1">
    <location>
        <position position="77"/>
    </location>
</feature>
<proteinExistence type="inferred from homology"/>
<dbReference type="EC" id="4.1.1.37" evidence="1"/>
<dbReference type="EMBL" id="CP000302">
    <property type="protein sequence ID" value="ABE53760.1"/>
    <property type="molecule type" value="Genomic_DNA"/>
</dbReference>
<dbReference type="RefSeq" id="WP_011494926.1">
    <property type="nucleotide sequence ID" value="NC_007954.1"/>
</dbReference>
<dbReference type="SMR" id="Q12S16"/>
<dbReference type="STRING" id="318161.Sden_0468"/>
<dbReference type="KEGG" id="sdn:Sden_0468"/>
<dbReference type="eggNOG" id="COG0407">
    <property type="taxonomic scope" value="Bacteria"/>
</dbReference>
<dbReference type="HOGENOM" id="CLU_040933_0_0_6"/>
<dbReference type="OrthoDB" id="9806656at2"/>
<dbReference type="UniPathway" id="UPA00251">
    <property type="reaction ID" value="UER00321"/>
</dbReference>
<dbReference type="Proteomes" id="UP000001982">
    <property type="component" value="Chromosome"/>
</dbReference>
<dbReference type="GO" id="GO:0005829">
    <property type="term" value="C:cytosol"/>
    <property type="evidence" value="ECO:0007669"/>
    <property type="project" value="TreeGrafter"/>
</dbReference>
<dbReference type="GO" id="GO:0004853">
    <property type="term" value="F:uroporphyrinogen decarboxylase activity"/>
    <property type="evidence" value="ECO:0007669"/>
    <property type="project" value="UniProtKB-UniRule"/>
</dbReference>
<dbReference type="GO" id="GO:0019353">
    <property type="term" value="P:protoporphyrinogen IX biosynthetic process from glutamate"/>
    <property type="evidence" value="ECO:0007669"/>
    <property type="project" value="TreeGrafter"/>
</dbReference>
<dbReference type="CDD" id="cd00717">
    <property type="entry name" value="URO-D"/>
    <property type="match status" value="1"/>
</dbReference>
<dbReference type="FunFam" id="3.20.20.210:FF:000001">
    <property type="entry name" value="Uroporphyrinogen decarboxylase"/>
    <property type="match status" value="1"/>
</dbReference>
<dbReference type="Gene3D" id="3.20.20.210">
    <property type="match status" value="1"/>
</dbReference>
<dbReference type="HAMAP" id="MF_00218">
    <property type="entry name" value="URO_D"/>
    <property type="match status" value="1"/>
</dbReference>
<dbReference type="InterPro" id="IPR038071">
    <property type="entry name" value="UROD/MetE-like_sf"/>
</dbReference>
<dbReference type="InterPro" id="IPR006361">
    <property type="entry name" value="Uroporphyrinogen_deCO2ase_HemE"/>
</dbReference>
<dbReference type="InterPro" id="IPR000257">
    <property type="entry name" value="Uroporphyrinogen_deCOase"/>
</dbReference>
<dbReference type="NCBIfam" id="TIGR01464">
    <property type="entry name" value="hemE"/>
    <property type="match status" value="1"/>
</dbReference>
<dbReference type="PANTHER" id="PTHR21091">
    <property type="entry name" value="METHYLTETRAHYDROFOLATE:HOMOCYSTEINE METHYLTRANSFERASE RELATED"/>
    <property type="match status" value="1"/>
</dbReference>
<dbReference type="PANTHER" id="PTHR21091:SF169">
    <property type="entry name" value="UROPORPHYRINOGEN DECARBOXYLASE"/>
    <property type="match status" value="1"/>
</dbReference>
<dbReference type="Pfam" id="PF01208">
    <property type="entry name" value="URO-D"/>
    <property type="match status" value="1"/>
</dbReference>
<dbReference type="SUPFAM" id="SSF51726">
    <property type="entry name" value="UROD/MetE-like"/>
    <property type="match status" value="1"/>
</dbReference>
<dbReference type="PROSITE" id="PS00906">
    <property type="entry name" value="UROD_1"/>
    <property type="match status" value="1"/>
</dbReference>
<dbReference type="PROSITE" id="PS00907">
    <property type="entry name" value="UROD_2"/>
    <property type="match status" value="1"/>
</dbReference>
<evidence type="ECO:0000255" key="1">
    <source>
        <dbReference type="HAMAP-Rule" id="MF_00218"/>
    </source>
</evidence>